<sequence length="754" mass="83384">MTSNNSLLGRGRMSYSSTAPPRFKRSVDQRDTFSDNFDYDKDSSNRGRTYIAASNSTTGVPPPNNSRSGCTNNTNNTNNTSNTSNTNNNDSVDENTVFETLPYYLPCFSWLPEYTFNKLWGDVIAGISVASFQIPLALSYTTSIAHVPPLCGLYSLAISPFVYGILGSVPQMIVGPESAISLVVGQAVESITLHKENVSLIDISTVITFVSGTILLFSGISRFGFLGNVLSKALLRGFISSVGLVMIINSLISELKLDKFLVSLPQHYHTPFEKILFLIDYAPAQYHIPTAIFSGCCLIVLFLTRLLKRKLMKYHKSAIFFPDILLVVIVTILISMKFNLKHRYGISIIGDFSMDNFDELKNPLTRPRRKLIPDLFSASLIVAMLGFFESTTASKSLGTTYNLTVSSNRELVALGFMNIVISLFGALPAFGGYGRSKINALSGAQSVMSGVFMGVITLITMNLLLQFVHYIPNCVLSVITTIIGISLLEEVPGDIKFHLRCGGFSELFVFAVTFCTTIFYSIEAGICIGCVYSIINIIKHSAKSRIQILARVAGTSNFTNLDDYMMNMKRNSLDVEGTEEIEGCMIVRIPEPLTFTNSEDLKQRLDRIERYGSSKIHPGRKSLRSKDSIKYVIFDLGGMTSIDSSAAQVLEEIITSYKRRNVFIYLVNVSINDKVRRRLFKAGVAASVERAQANNNENNTSNTFSDAGETYSPYFDSIDAALYEIEKMKIKGNNVPNNDSESFMSNTLFNSSLV</sequence>
<protein>
    <recommendedName>
        <fullName>Putative sulfate transporter YPR003C</fullName>
    </recommendedName>
</protein>
<proteinExistence type="evidence at protein level"/>
<name>SULX_YEAST</name>
<keyword id="KW-0256">Endoplasmic reticulum</keyword>
<keyword id="KW-0472">Membrane</keyword>
<keyword id="KW-1185">Reference proteome</keyword>
<keyword id="KW-0812">Transmembrane</keyword>
<keyword id="KW-1133">Transmembrane helix</keyword>
<keyword id="KW-0813">Transport</keyword>
<reference key="1">
    <citation type="journal article" date="1997" name="Nature">
        <title>The nucleotide sequence of Saccharomyces cerevisiae chromosome XVI.</title>
        <authorList>
            <person name="Bussey H."/>
            <person name="Storms R.K."/>
            <person name="Ahmed A."/>
            <person name="Albermann K."/>
            <person name="Allen E."/>
            <person name="Ansorge W."/>
            <person name="Araujo R."/>
            <person name="Aparicio A."/>
            <person name="Barrell B.G."/>
            <person name="Badcock K."/>
            <person name="Benes V."/>
            <person name="Botstein D."/>
            <person name="Bowman S."/>
            <person name="Brueckner M."/>
            <person name="Carpenter J."/>
            <person name="Cherry J.M."/>
            <person name="Chung E."/>
            <person name="Churcher C.M."/>
            <person name="Coster F."/>
            <person name="Davis K."/>
            <person name="Davis R.W."/>
            <person name="Dietrich F.S."/>
            <person name="Delius H."/>
            <person name="DiPaolo T."/>
            <person name="Dubois E."/>
            <person name="Duesterhoeft A."/>
            <person name="Duncan M."/>
            <person name="Floeth M."/>
            <person name="Fortin N."/>
            <person name="Friesen J.D."/>
            <person name="Fritz C."/>
            <person name="Goffeau A."/>
            <person name="Hall J."/>
            <person name="Hebling U."/>
            <person name="Heumann K."/>
            <person name="Hilbert H."/>
            <person name="Hillier L.W."/>
            <person name="Hunicke-Smith S."/>
            <person name="Hyman R.W."/>
            <person name="Johnston M."/>
            <person name="Kalman S."/>
            <person name="Kleine K."/>
            <person name="Komp C."/>
            <person name="Kurdi O."/>
            <person name="Lashkari D."/>
            <person name="Lew H."/>
            <person name="Lin A."/>
            <person name="Lin D."/>
            <person name="Louis E.J."/>
            <person name="Marathe R."/>
            <person name="Messenguy F."/>
            <person name="Mewes H.-W."/>
            <person name="Mirtipati S."/>
            <person name="Moestl D."/>
            <person name="Mueller-Auer S."/>
            <person name="Namath A."/>
            <person name="Nentwich U."/>
            <person name="Oefner P."/>
            <person name="Pearson D."/>
            <person name="Petel F.X."/>
            <person name="Pohl T.M."/>
            <person name="Purnelle B."/>
            <person name="Rajandream M.A."/>
            <person name="Rechmann S."/>
            <person name="Rieger M."/>
            <person name="Riles L."/>
            <person name="Roberts D."/>
            <person name="Schaefer M."/>
            <person name="Scharfe M."/>
            <person name="Scherens B."/>
            <person name="Schramm S."/>
            <person name="Schroeder M."/>
            <person name="Sdicu A.-M."/>
            <person name="Tettelin H."/>
            <person name="Urrestarazu L.A."/>
            <person name="Ushinsky S."/>
            <person name="Vierendeels F."/>
            <person name="Vissers S."/>
            <person name="Voss H."/>
            <person name="Walsh S.V."/>
            <person name="Wambutt R."/>
            <person name="Wang Y."/>
            <person name="Wedler E."/>
            <person name="Wedler H."/>
            <person name="Winnett E."/>
            <person name="Zhong W.-W."/>
            <person name="Zollner A."/>
            <person name="Vo D.H."/>
            <person name="Hani J."/>
        </authorList>
    </citation>
    <scope>NUCLEOTIDE SEQUENCE [LARGE SCALE GENOMIC DNA]</scope>
    <source>
        <strain>ATCC 204508 / S288c</strain>
    </source>
</reference>
<reference key="2">
    <citation type="journal article" date="2014" name="G3 (Bethesda)">
        <title>The reference genome sequence of Saccharomyces cerevisiae: Then and now.</title>
        <authorList>
            <person name="Engel S.R."/>
            <person name="Dietrich F.S."/>
            <person name="Fisk D.G."/>
            <person name="Binkley G."/>
            <person name="Balakrishnan R."/>
            <person name="Costanzo M.C."/>
            <person name="Dwight S.S."/>
            <person name="Hitz B.C."/>
            <person name="Karra K."/>
            <person name="Nash R.S."/>
            <person name="Weng S."/>
            <person name="Wong E.D."/>
            <person name="Lloyd P."/>
            <person name="Skrzypek M.S."/>
            <person name="Miyasato S.R."/>
            <person name="Simison M."/>
            <person name="Cherry J.M."/>
        </authorList>
    </citation>
    <scope>GENOME REANNOTATION</scope>
    <source>
        <strain>ATCC 204508 / S288c</strain>
    </source>
</reference>
<reference key="3">
    <citation type="journal article" date="2003" name="Nature">
        <title>Global analysis of protein localization in budding yeast.</title>
        <authorList>
            <person name="Huh W.-K."/>
            <person name="Falvo J.V."/>
            <person name="Gerke L.C."/>
            <person name="Carroll A.S."/>
            <person name="Howson R.W."/>
            <person name="Weissman J.S."/>
            <person name="O'Shea E.K."/>
        </authorList>
    </citation>
    <scope>SUBCELLULAR LOCATION [LARGE SCALE ANALYSIS]</scope>
</reference>
<reference key="4">
    <citation type="journal article" date="2006" name="Proc. Natl. Acad. Sci. U.S.A.">
        <title>A global topology map of the Saccharomyces cerevisiae membrane proteome.</title>
        <authorList>
            <person name="Kim H."/>
            <person name="Melen K."/>
            <person name="Oesterberg M."/>
            <person name="von Heijne G."/>
        </authorList>
    </citation>
    <scope>TOPOLOGY [LARGE SCALE ANALYSIS]</scope>
    <source>
        <strain>ATCC 208353 / W303-1A</strain>
    </source>
</reference>
<organism>
    <name type="scientific">Saccharomyces cerevisiae (strain ATCC 204508 / S288c)</name>
    <name type="common">Baker's yeast</name>
    <dbReference type="NCBI Taxonomy" id="559292"/>
    <lineage>
        <taxon>Eukaryota</taxon>
        <taxon>Fungi</taxon>
        <taxon>Dikarya</taxon>
        <taxon>Ascomycota</taxon>
        <taxon>Saccharomycotina</taxon>
        <taxon>Saccharomycetes</taxon>
        <taxon>Saccharomycetales</taxon>
        <taxon>Saccharomycetaceae</taxon>
        <taxon>Saccharomyces</taxon>
    </lineage>
</organism>
<gene>
    <name type="ordered locus">YPR003C</name>
    <name type="ORF">LPZ3C</name>
    <name type="ORF">YP9723.03C</name>
</gene>
<comment type="function">
    <text>Possible sulfate transporter.</text>
</comment>
<comment type="subcellular location">
    <subcellularLocation>
        <location evidence="4">Endoplasmic reticulum membrane</location>
        <topology evidence="4">Multi-pass membrane protein</topology>
    </subcellularLocation>
</comment>
<comment type="similarity">
    <text evidence="5">Belongs to the SLC26A/SulP transporter (TC 2.A.53) family.</text>
</comment>
<dbReference type="EMBL" id="Z71255">
    <property type="protein sequence ID" value="CAA95043.1"/>
    <property type="molecule type" value="Genomic_DNA"/>
</dbReference>
<dbReference type="EMBL" id="U31900">
    <property type="protein sequence ID" value="AAA97582.1"/>
    <property type="molecule type" value="Genomic_DNA"/>
</dbReference>
<dbReference type="EMBL" id="Z48951">
    <property type="protein sequence ID" value="CAA88781.1"/>
    <property type="molecule type" value="Genomic_DNA"/>
</dbReference>
<dbReference type="EMBL" id="BK006949">
    <property type="protein sequence ID" value="DAA11430.1"/>
    <property type="molecule type" value="Genomic_DNA"/>
</dbReference>
<dbReference type="PIR" id="S52816">
    <property type="entry name" value="S52816"/>
</dbReference>
<dbReference type="RefSeq" id="NP_015328.1">
    <property type="nucleotide sequence ID" value="NM_001184100.1"/>
</dbReference>
<dbReference type="SMR" id="P53394"/>
<dbReference type="BioGRID" id="36180">
    <property type="interactions" value="55"/>
</dbReference>
<dbReference type="DIP" id="DIP-5055N"/>
<dbReference type="FunCoup" id="P53394">
    <property type="interactions" value="379"/>
</dbReference>
<dbReference type="IntAct" id="P53394">
    <property type="interactions" value="4"/>
</dbReference>
<dbReference type="MINT" id="P53394"/>
<dbReference type="STRING" id="4932.YPR003C"/>
<dbReference type="TCDB" id="2.A.53.1.11">
    <property type="family name" value="the sulfate permease (sulp) family"/>
</dbReference>
<dbReference type="iPTMnet" id="P53394"/>
<dbReference type="PaxDb" id="4932-YPR003C"/>
<dbReference type="PeptideAtlas" id="P53394"/>
<dbReference type="EnsemblFungi" id="YPR003C_mRNA">
    <property type="protein sequence ID" value="YPR003C"/>
    <property type="gene ID" value="YPR003C"/>
</dbReference>
<dbReference type="GeneID" id="856111"/>
<dbReference type="KEGG" id="sce:YPR003C"/>
<dbReference type="AGR" id="SGD:S000006207"/>
<dbReference type="SGD" id="S000006207">
    <property type="gene designation" value="YPR003C"/>
</dbReference>
<dbReference type="VEuPathDB" id="FungiDB:YPR003C"/>
<dbReference type="eggNOG" id="KOG0236">
    <property type="taxonomic scope" value="Eukaryota"/>
</dbReference>
<dbReference type="GeneTree" id="ENSGT01120000271864"/>
<dbReference type="HOGENOM" id="CLU_003182_10_1_1"/>
<dbReference type="InParanoid" id="P53394"/>
<dbReference type="OMA" id="TGPMSVT"/>
<dbReference type="OrthoDB" id="427213at2759"/>
<dbReference type="BioCyc" id="YEAST:G3O-34165-MONOMER"/>
<dbReference type="BioGRID-ORCS" id="856111">
    <property type="hits" value="2 hits in 10 CRISPR screens"/>
</dbReference>
<dbReference type="PRO" id="PR:P53394"/>
<dbReference type="Proteomes" id="UP000002311">
    <property type="component" value="Chromosome XVI"/>
</dbReference>
<dbReference type="RNAct" id="P53394">
    <property type="molecule type" value="protein"/>
</dbReference>
<dbReference type="GO" id="GO:0005783">
    <property type="term" value="C:endoplasmic reticulum"/>
    <property type="evidence" value="ECO:0007005"/>
    <property type="project" value="SGD"/>
</dbReference>
<dbReference type="GO" id="GO:0005789">
    <property type="term" value="C:endoplasmic reticulum membrane"/>
    <property type="evidence" value="ECO:0007669"/>
    <property type="project" value="UniProtKB-SubCell"/>
</dbReference>
<dbReference type="GO" id="GO:0005886">
    <property type="term" value="C:plasma membrane"/>
    <property type="evidence" value="ECO:0000318"/>
    <property type="project" value="GO_Central"/>
</dbReference>
<dbReference type="GO" id="GO:0008271">
    <property type="term" value="F:secondary active sulfate transmembrane transporter activity"/>
    <property type="evidence" value="ECO:0007669"/>
    <property type="project" value="InterPro"/>
</dbReference>
<dbReference type="GO" id="GO:0015116">
    <property type="term" value="F:sulfate transmembrane transporter activity"/>
    <property type="evidence" value="ECO:0000318"/>
    <property type="project" value="GO_Central"/>
</dbReference>
<dbReference type="CDD" id="cd07042">
    <property type="entry name" value="STAS_SulP_like_sulfate_transporter"/>
    <property type="match status" value="1"/>
</dbReference>
<dbReference type="FunFam" id="3.30.750.24:FF:000056">
    <property type="entry name" value="YPR003C-like protein"/>
    <property type="match status" value="1"/>
</dbReference>
<dbReference type="Gene3D" id="3.30.750.24">
    <property type="entry name" value="STAS domain"/>
    <property type="match status" value="1"/>
</dbReference>
<dbReference type="InterPro" id="IPR018045">
    <property type="entry name" value="S04_transporter_CS"/>
</dbReference>
<dbReference type="InterPro" id="IPR011547">
    <property type="entry name" value="SLC26A/SulP_dom"/>
</dbReference>
<dbReference type="InterPro" id="IPR001902">
    <property type="entry name" value="SLC26A/SulP_fam"/>
</dbReference>
<dbReference type="InterPro" id="IPR002645">
    <property type="entry name" value="STAS_dom"/>
</dbReference>
<dbReference type="InterPro" id="IPR036513">
    <property type="entry name" value="STAS_dom_sf"/>
</dbReference>
<dbReference type="PANTHER" id="PTHR11814">
    <property type="entry name" value="SULFATE TRANSPORTER"/>
    <property type="match status" value="1"/>
</dbReference>
<dbReference type="Pfam" id="PF01740">
    <property type="entry name" value="STAS"/>
    <property type="match status" value="1"/>
</dbReference>
<dbReference type="Pfam" id="PF00916">
    <property type="entry name" value="Sulfate_transp"/>
    <property type="match status" value="1"/>
</dbReference>
<dbReference type="SUPFAM" id="SSF52091">
    <property type="entry name" value="SpoIIaa-like"/>
    <property type="match status" value="1"/>
</dbReference>
<dbReference type="PROSITE" id="PS01130">
    <property type="entry name" value="SLC26A"/>
    <property type="match status" value="1"/>
</dbReference>
<dbReference type="PROSITE" id="PS50801">
    <property type="entry name" value="STAS"/>
    <property type="match status" value="1"/>
</dbReference>
<feature type="chain" id="PRO_0000080192" description="Putative sulfate transporter YPR003C">
    <location>
        <begin position="1"/>
        <end position="754"/>
    </location>
</feature>
<feature type="topological domain" description="Cytoplasmic" evidence="1">
    <location>
        <begin position="1"/>
        <end position="118"/>
    </location>
</feature>
<feature type="transmembrane region" description="Helical" evidence="1">
    <location>
        <begin position="119"/>
        <end position="139"/>
    </location>
</feature>
<feature type="topological domain" description="Lumenal" evidence="1">
    <location>
        <begin position="140"/>
        <end position="146"/>
    </location>
</feature>
<feature type="transmembrane region" description="Helical" evidence="1">
    <location>
        <begin position="147"/>
        <end position="167"/>
    </location>
</feature>
<feature type="topological domain" description="Cytoplasmic" evidence="1">
    <location>
        <begin position="168"/>
        <end position="172"/>
    </location>
</feature>
<feature type="transmembrane region" description="Helical" evidence="1">
    <location>
        <begin position="173"/>
        <end position="193"/>
    </location>
</feature>
<feature type="topological domain" description="Lumenal" evidence="1">
    <location>
        <begin position="194"/>
        <end position="199"/>
    </location>
</feature>
<feature type="transmembrane region" description="Helical" evidence="1">
    <location>
        <begin position="200"/>
        <end position="220"/>
    </location>
</feature>
<feature type="topological domain" description="Cytoplasmic" evidence="1">
    <location>
        <begin position="221"/>
        <end position="232"/>
    </location>
</feature>
<feature type="transmembrane region" description="Helical" evidence="1">
    <location>
        <begin position="233"/>
        <end position="253"/>
    </location>
</feature>
<feature type="topological domain" description="Lumenal" evidence="1">
    <location>
        <begin position="254"/>
        <end position="282"/>
    </location>
</feature>
<feature type="transmembrane region" description="Helical" evidence="1">
    <location>
        <begin position="283"/>
        <end position="303"/>
    </location>
</feature>
<feature type="topological domain" description="Cytoplasmic" evidence="1">
    <location>
        <begin position="304"/>
        <end position="317"/>
    </location>
</feature>
<feature type="transmembrane region" description="Helical" evidence="1">
    <location>
        <begin position="318"/>
        <end position="338"/>
    </location>
</feature>
<feature type="topological domain" description="Lumenal" evidence="1">
    <location>
        <begin position="339"/>
        <end position="370"/>
    </location>
</feature>
<feature type="transmembrane region" description="Helical" evidence="1">
    <location>
        <begin position="371"/>
        <end position="391"/>
    </location>
</feature>
<feature type="topological domain" description="Cytoplasmic" evidence="1">
    <location>
        <begin position="392"/>
        <end position="410"/>
    </location>
</feature>
<feature type="transmembrane region" description="Helical" evidence="1">
    <location>
        <begin position="411"/>
        <end position="431"/>
    </location>
</feature>
<feature type="topological domain" description="Lumenal" evidence="1">
    <location>
        <begin position="432"/>
        <end position="450"/>
    </location>
</feature>
<feature type="transmembrane region" description="Helical" evidence="1">
    <location>
        <begin position="451"/>
        <end position="471"/>
    </location>
</feature>
<feature type="topological domain" description="Cytoplasmic" evidence="1">
    <location>
        <begin position="472"/>
        <end position="474"/>
    </location>
</feature>
<feature type="transmembrane region" description="Helical" evidence="1">
    <location>
        <begin position="475"/>
        <end position="495"/>
    </location>
</feature>
<feature type="topological domain" description="Lumenal" evidence="1">
    <location>
        <begin position="496"/>
        <end position="517"/>
    </location>
</feature>
<feature type="transmembrane region" description="Helical" evidence="1">
    <location>
        <begin position="518"/>
        <end position="538"/>
    </location>
</feature>
<feature type="topological domain" description="Cytoplasmic" evidence="1">
    <location>
        <begin position="539"/>
        <end position="754"/>
    </location>
</feature>
<feature type="domain" description="STAS" evidence="2">
    <location>
        <begin position="574"/>
        <end position="725"/>
    </location>
</feature>
<feature type="region of interest" description="Disordered" evidence="3">
    <location>
        <begin position="1"/>
        <end position="91"/>
    </location>
</feature>
<feature type="compositionally biased region" description="Basic and acidic residues" evidence="3">
    <location>
        <begin position="25"/>
        <end position="45"/>
    </location>
</feature>
<feature type="compositionally biased region" description="Low complexity" evidence="3">
    <location>
        <begin position="65"/>
        <end position="89"/>
    </location>
</feature>
<accession>P53394</accession>
<accession>D6W414</accession>
<evidence type="ECO:0000255" key="1"/>
<evidence type="ECO:0000255" key="2">
    <source>
        <dbReference type="PROSITE-ProRule" id="PRU00198"/>
    </source>
</evidence>
<evidence type="ECO:0000256" key="3">
    <source>
        <dbReference type="SAM" id="MobiDB-lite"/>
    </source>
</evidence>
<evidence type="ECO:0000269" key="4">
    <source>
    </source>
</evidence>
<evidence type="ECO:0000305" key="5"/>